<protein>
    <recommendedName>
        <fullName evidence="5">Immunomodulating metalloprotease</fullName>
        <ecNumber evidence="4">3.4.24.-</ecNumber>
    </recommendedName>
    <alternativeName>
        <fullName evidence="5">IMPa</fullName>
    </alternativeName>
</protein>
<keyword id="KW-0002">3D-structure</keyword>
<keyword id="KW-0378">Hydrolase</keyword>
<keyword id="KW-0479">Metal-binding</keyword>
<keyword id="KW-0482">Metalloprotease</keyword>
<keyword id="KW-0645">Protease</keyword>
<keyword id="KW-1185">Reference proteome</keyword>
<keyword id="KW-0964">Secreted</keyword>
<keyword id="KW-0732">Signal</keyword>
<keyword id="KW-0862">Zinc</keyword>
<evidence type="ECO:0000255" key="1"/>
<evidence type="ECO:0000255" key="2">
    <source>
        <dbReference type="PROSITE-ProRule" id="PRU01060"/>
    </source>
</evidence>
<evidence type="ECO:0000255" key="3">
    <source>
        <dbReference type="PROSITE-ProRule" id="PRU10095"/>
    </source>
</evidence>
<evidence type="ECO:0000269" key="4">
    <source>
    </source>
</evidence>
<evidence type="ECO:0000303" key="5">
    <source>
    </source>
</evidence>
<evidence type="ECO:0000305" key="6"/>
<evidence type="ECO:0000312" key="7">
    <source>
        <dbReference type="EMBL" id="AAG03961.1"/>
    </source>
</evidence>
<evidence type="ECO:0007829" key="8">
    <source>
        <dbReference type="PDB" id="5KDV"/>
    </source>
</evidence>
<evidence type="ECO:0007829" key="9">
    <source>
        <dbReference type="PDB" id="5KDW"/>
    </source>
</evidence>
<evidence type="ECO:0007829" key="10">
    <source>
        <dbReference type="PDB" id="5KDX"/>
    </source>
</evidence>
<evidence type="ECO:0007829" key="11">
    <source>
        <dbReference type="PDB" id="7JTV"/>
    </source>
</evidence>
<gene>
    <name evidence="5" type="primary">impA</name>
    <name evidence="7" type="ordered locus">PA0572</name>
</gene>
<organism>
    <name type="scientific">Pseudomonas aeruginosa (strain ATCC 15692 / DSM 22644 / CIP 104116 / JCM 14847 / LMG 12228 / 1C / PRS 101 / PAO1)</name>
    <dbReference type="NCBI Taxonomy" id="208964"/>
    <lineage>
        <taxon>Bacteria</taxon>
        <taxon>Pseudomonadati</taxon>
        <taxon>Pseudomonadota</taxon>
        <taxon>Gammaproteobacteria</taxon>
        <taxon>Pseudomonadales</taxon>
        <taxon>Pseudomonadaceae</taxon>
        <taxon>Pseudomonas</taxon>
    </lineage>
</organism>
<proteinExistence type="evidence at protein level"/>
<dbReference type="EC" id="3.4.24.-" evidence="4"/>
<dbReference type="EMBL" id="AE004091">
    <property type="protein sequence ID" value="AAG03961.1"/>
    <property type="molecule type" value="Genomic_DNA"/>
</dbReference>
<dbReference type="PIR" id="E83574">
    <property type="entry name" value="E83574"/>
</dbReference>
<dbReference type="RefSeq" id="NP_249263.1">
    <property type="nucleotide sequence ID" value="NC_002516.2"/>
</dbReference>
<dbReference type="RefSeq" id="WP_003142775.1">
    <property type="nucleotide sequence ID" value="NZ_QZGE01000010.1"/>
</dbReference>
<dbReference type="PDB" id="5KDV">
    <property type="method" value="X-ray"/>
    <property type="resolution" value="1.93 A"/>
    <property type="chains" value="A=42-923"/>
</dbReference>
<dbReference type="PDB" id="5KDW">
    <property type="method" value="X-ray"/>
    <property type="resolution" value="1.85 A"/>
    <property type="chains" value="A/B=42-923"/>
</dbReference>
<dbReference type="PDB" id="5KDX">
    <property type="method" value="X-ray"/>
    <property type="resolution" value="2.40 A"/>
    <property type="chains" value="A/B=42-923"/>
</dbReference>
<dbReference type="PDB" id="7JTV">
    <property type="method" value="X-ray"/>
    <property type="resolution" value="2.45 A"/>
    <property type="chains" value="A/B=42-923"/>
</dbReference>
<dbReference type="PDBsum" id="5KDV"/>
<dbReference type="PDBsum" id="5KDW"/>
<dbReference type="PDBsum" id="5KDX"/>
<dbReference type="PDBsum" id="7JTV"/>
<dbReference type="SMR" id="Q9I5W4"/>
<dbReference type="STRING" id="208964.PA0572"/>
<dbReference type="MEROPS" id="M88.001"/>
<dbReference type="PaxDb" id="208964-PA0572"/>
<dbReference type="DNASU" id="878237"/>
<dbReference type="GeneID" id="878237"/>
<dbReference type="KEGG" id="pae:PA0572"/>
<dbReference type="PATRIC" id="fig|208964.12.peg.604"/>
<dbReference type="PseudoCAP" id="PA0572"/>
<dbReference type="HOGENOM" id="CLU_004117_0_0_6"/>
<dbReference type="InParanoid" id="Q9I5W4"/>
<dbReference type="OrthoDB" id="9122461at2"/>
<dbReference type="BioCyc" id="PAER208964:G1FZ6-578-MONOMER"/>
<dbReference type="PHI-base" id="PHI:11501"/>
<dbReference type="Proteomes" id="UP000002438">
    <property type="component" value="Chromosome"/>
</dbReference>
<dbReference type="GO" id="GO:0005615">
    <property type="term" value="C:extracellular space"/>
    <property type="evidence" value="ECO:0000314"/>
    <property type="project" value="UniProtKB"/>
</dbReference>
<dbReference type="GO" id="GO:0046872">
    <property type="term" value="F:metal ion binding"/>
    <property type="evidence" value="ECO:0007669"/>
    <property type="project" value="UniProtKB-KW"/>
</dbReference>
<dbReference type="GO" id="GO:0008237">
    <property type="term" value="F:metallopeptidase activity"/>
    <property type="evidence" value="ECO:0000314"/>
    <property type="project" value="UniProtKB"/>
</dbReference>
<dbReference type="GO" id="GO:1903237">
    <property type="term" value="P:negative regulation of leukocyte tethering or rolling"/>
    <property type="evidence" value="ECO:0000314"/>
    <property type="project" value="UniProtKB"/>
</dbReference>
<dbReference type="GO" id="GO:0030163">
    <property type="term" value="P:protein catabolic process"/>
    <property type="evidence" value="ECO:0000314"/>
    <property type="project" value="UniProtKB"/>
</dbReference>
<dbReference type="GO" id="GO:0015628">
    <property type="term" value="P:protein secretion by the type II secretion system"/>
    <property type="evidence" value="ECO:0000314"/>
    <property type="project" value="PseudoCAP"/>
</dbReference>
<dbReference type="GO" id="GO:0043952">
    <property type="term" value="P:protein transport by the Sec complex"/>
    <property type="evidence" value="ECO:0000314"/>
    <property type="project" value="PseudoCAP"/>
</dbReference>
<dbReference type="GO" id="GO:0006508">
    <property type="term" value="P:proteolysis"/>
    <property type="evidence" value="ECO:0007669"/>
    <property type="project" value="UniProtKB-KW"/>
</dbReference>
<dbReference type="Gene3D" id="1.10.390.30">
    <property type="entry name" value="Peptidase M60, enhancin-like domain 3"/>
    <property type="match status" value="1"/>
</dbReference>
<dbReference type="InterPro" id="IPR041549">
    <property type="entry name" value="IMPa_helical"/>
</dbReference>
<dbReference type="InterPro" id="IPR040711">
    <property type="entry name" value="IMPa_N_2"/>
</dbReference>
<dbReference type="InterPro" id="IPR042279">
    <property type="entry name" value="Pep_M60_3"/>
</dbReference>
<dbReference type="InterPro" id="IPR031161">
    <property type="entry name" value="Peptidase_M60_dom"/>
</dbReference>
<dbReference type="NCBIfam" id="NF038322">
    <property type="entry name" value="ImpA_fam_HExGH"/>
    <property type="match status" value="1"/>
</dbReference>
<dbReference type="Pfam" id="PF18642">
    <property type="entry name" value="IMPa_helical"/>
    <property type="match status" value="1"/>
</dbReference>
<dbReference type="Pfam" id="PF18650">
    <property type="entry name" value="IMPa_N_2"/>
    <property type="match status" value="1"/>
</dbReference>
<dbReference type="Pfam" id="PF13402">
    <property type="entry name" value="Peptidase_M60"/>
    <property type="match status" value="1"/>
</dbReference>
<dbReference type="SMART" id="SM01276">
    <property type="entry name" value="M60-like"/>
    <property type="match status" value="1"/>
</dbReference>
<dbReference type="PROSITE" id="PS51723">
    <property type="entry name" value="PEPTIDASE_M60"/>
    <property type="match status" value="1"/>
</dbReference>
<dbReference type="PROSITE" id="PS00142">
    <property type="entry name" value="ZINC_PROTEASE"/>
    <property type="match status" value="1"/>
</dbReference>
<accession>Q9I5W4</accession>
<name>IMPA_PSEAE</name>
<sequence length="923" mass="100155">MSLSTTAFPSLQGENMSRSPIPRHRALLAGFCLAGALSAQAATQEEILDAALVSGDSSQLTDSHLVALRLQQQVERIRQTRTQLLDGLYQNLSQAYDPGAASMWVLPANPDNTLPFLIGDKGRVLASLSLEAGGRGLAYGTNVLTQLSGTNAAHAPLLKRAVQWLVNGDPGAATAKDFKVSVVGVDKTAALNGLKSAGLQPADAACNALTDASCASTSKLLVLGNGASAASLSATVRARLQAGLPILFVHTNGWNQSSTGQQILAGLGLQEGPYGGNYWDKDRVPSSRTRTRSVELGGAYGQDPALVQQIVDGSWRTDYDWSKCTSYVGRTTCDDVPGLSDFSKRVDVLKGALDAYNQKAQNLFALPGTTSLRLWLLWADAVRQNIRYPMDKAADTARFQETFVADAIVGYVREAGAAQKELGSYAGQRQQSMPVSGSEETLTLTLPSAQGFTAIGRMAAPGKRLSIRIEDAGQASLAVGLNTQRIGSTRLWNTRQYDRPRFLKSPDIKLQANQSVALVSPYGGLLQLVYSGATPGQTVTVKVTGAASQPFLDIQPGEDSSQAIADFIQALDADKADWLEIRSGSVEVHAKVEKVRGSIDKDYGGDVQRFIRELNEVFIDDAYTLAGFAIPNQAKTPAIQQECAARGWDCDSETLHKLPGTQHINVDQYAQCGGGCSGNPYDQTWGLNPRGWGESHELGHNLQVNRLKVYGGRSGEISNQIFPLHKDWRVLREFGQNLDDTRVNYRNAYNLIVAGRAEADPLAGVYKRLWEDPGTYALNGERMAFYTQWVHYWADLKNDPLQGWDIWTLLYLHQRQVDKSDWDANKAALGYGTYAQRPGNSGDASSTDGNDNLLLGLSWLTQRDQRPTFALWGIRTSAAAQAQVAAYGFAEQPAFFYANNRTNEYSTVKLLDMSQGSPAWPFP</sequence>
<comment type="function">
    <text evidence="4">Protease that degrades several proteins of the host immune system. Cleaves P-selectin glycoprotein ligand-1 (PSGL-1), leading to its functional inhibition; PSGL-1 is a leukocyte cell-surface receptor essential for leukocyte recruitment to the site of infection. Next to PSGL-1, targets host CD43 and CD44 that are also involved in leukocyte homing. Thus, prevents neutrophil extravasation and thereby protects P.aeruginosa from neutrophil attack. Is also able to inhibit the decay accelerating factor (CD55), but not the cell-surface receptors CD46 and CD31.</text>
</comment>
<comment type="cofactor">
    <cofactor evidence="6">
        <name>Zn(2+)</name>
        <dbReference type="ChEBI" id="CHEBI:29105"/>
    </cofactor>
</comment>
<comment type="activity regulation">
    <text evidence="4">Proteolytic activity is blocked in the presence of EDTA.</text>
</comment>
<comment type="subcellular location">
    <subcellularLocation>
        <location evidence="4">Secreted</location>
    </subcellularLocation>
</comment>
<comment type="similarity">
    <text evidence="6">Belongs to the peptidase M88 family.</text>
</comment>
<feature type="signal peptide" evidence="1">
    <location>
        <begin position="1"/>
        <end position="41"/>
    </location>
</feature>
<feature type="chain" id="PRO_5004328522" description="Immunomodulating metalloprotease">
    <location>
        <begin position="42"/>
        <end position="923"/>
    </location>
</feature>
<feature type="domain" description="Peptidase M60" evidence="2">
    <location>
        <begin position="450"/>
        <end position="794"/>
    </location>
</feature>
<feature type="active site" evidence="3">
    <location>
        <position position="697"/>
    </location>
</feature>
<feature type="binding site" evidence="3">
    <location>
        <position position="696"/>
    </location>
    <ligand>
        <name>Zn(2+)</name>
        <dbReference type="ChEBI" id="CHEBI:29105"/>
        <note>catalytic</note>
    </ligand>
</feature>
<feature type="binding site" evidence="3">
    <location>
        <position position="700"/>
    </location>
    <ligand>
        <name>Zn(2+)</name>
        <dbReference type="ChEBI" id="CHEBI:29105"/>
        <note>catalytic</note>
    </ligand>
</feature>
<feature type="helix" evidence="9">
    <location>
        <begin position="44"/>
        <end position="54"/>
    </location>
</feature>
<feature type="helix" evidence="9">
    <location>
        <begin position="63"/>
        <end position="89"/>
    </location>
</feature>
<feature type="strand" evidence="9">
    <location>
        <begin position="105"/>
        <end position="109"/>
    </location>
</feature>
<feature type="turn" evidence="9">
    <location>
        <begin position="110"/>
        <end position="112"/>
    </location>
</feature>
<feature type="strand" evidence="9">
    <location>
        <begin position="113"/>
        <end position="118"/>
    </location>
</feature>
<feature type="strand" evidence="9">
    <location>
        <begin position="124"/>
        <end position="129"/>
    </location>
</feature>
<feature type="helix" evidence="9">
    <location>
        <begin position="131"/>
        <end position="133"/>
    </location>
</feature>
<feature type="strand" evidence="9">
    <location>
        <begin position="136"/>
        <end position="141"/>
    </location>
</feature>
<feature type="helix" evidence="9">
    <location>
        <begin position="143"/>
        <end position="145"/>
    </location>
</feature>
<feature type="turn" evidence="9">
    <location>
        <begin position="147"/>
        <end position="151"/>
    </location>
</feature>
<feature type="helix" evidence="9">
    <location>
        <begin position="152"/>
        <end position="154"/>
    </location>
</feature>
<feature type="helix" evidence="9">
    <location>
        <begin position="155"/>
        <end position="167"/>
    </location>
</feature>
<feature type="strand" evidence="9">
    <location>
        <begin position="178"/>
        <end position="185"/>
    </location>
</feature>
<feature type="helix" evidence="9">
    <location>
        <begin position="187"/>
        <end position="196"/>
    </location>
</feature>
<feature type="strand" evidence="9">
    <location>
        <begin position="201"/>
        <end position="203"/>
    </location>
</feature>
<feature type="turn" evidence="9">
    <location>
        <begin position="208"/>
        <end position="210"/>
    </location>
</feature>
<feature type="helix" evidence="9">
    <location>
        <begin position="212"/>
        <end position="217"/>
    </location>
</feature>
<feature type="strand" evidence="9">
    <location>
        <begin position="219"/>
        <end position="223"/>
    </location>
</feature>
<feature type="helix" evidence="9">
    <location>
        <begin position="232"/>
        <end position="241"/>
    </location>
</feature>
<feature type="strand" evidence="9">
    <location>
        <begin position="246"/>
        <end position="249"/>
    </location>
</feature>
<feature type="helix" evidence="9">
    <location>
        <begin position="258"/>
        <end position="266"/>
    </location>
</feature>
<feature type="strand" evidence="9">
    <location>
        <begin position="269"/>
        <end position="271"/>
    </location>
</feature>
<feature type="turn" evidence="9">
    <location>
        <begin position="274"/>
        <end position="280"/>
    </location>
</feature>
<feature type="helix" evidence="9">
    <location>
        <begin position="290"/>
        <end position="299"/>
    </location>
</feature>
<feature type="turn" evidence="11">
    <location>
        <begin position="300"/>
        <end position="302"/>
    </location>
</feature>
<feature type="helix" evidence="9">
    <location>
        <begin position="304"/>
        <end position="312"/>
    </location>
</feature>
<feature type="helix" evidence="9">
    <location>
        <begin position="321"/>
        <end position="323"/>
    </location>
</feature>
<feature type="strand" evidence="9">
    <location>
        <begin position="325"/>
        <end position="327"/>
    </location>
</feature>
<feature type="strand" evidence="9">
    <location>
        <begin position="330"/>
        <end position="332"/>
    </location>
</feature>
<feature type="helix" evidence="9">
    <location>
        <begin position="339"/>
        <end position="358"/>
    </location>
</feature>
<feature type="helix" evidence="9">
    <location>
        <begin position="363"/>
        <end position="365"/>
    </location>
</feature>
<feature type="strand" evidence="9">
    <location>
        <begin position="366"/>
        <end position="368"/>
    </location>
</feature>
<feature type="helix" evidence="9">
    <location>
        <begin position="370"/>
        <end position="385"/>
    </location>
</feature>
<feature type="turn" evidence="9">
    <location>
        <begin position="392"/>
        <end position="395"/>
    </location>
</feature>
<feature type="helix" evidence="9">
    <location>
        <begin position="396"/>
        <end position="406"/>
    </location>
</feature>
<feature type="strand" evidence="9">
    <location>
        <begin position="412"/>
        <end position="414"/>
    </location>
</feature>
<feature type="turn" evidence="9">
    <location>
        <begin position="423"/>
        <end position="425"/>
    </location>
</feature>
<feature type="helix" evidence="9">
    <location>
        <begin position="428"/>
        <end position="432"/>
    </location>
</feature>
<feature type="strand" evidence="9">
    <location>
        <begin position="440"/>
        <end position="445"/>
    </location>
</feature>
<feature type="strand" evidence="9">
    <location>
        <begin position="448"/>
        <end position="459"/>
    </location>
</feature>
<feature type="strand" evidence="9">
    <location>
        <begin position="465"/>
        <end position="470"/>
    </location>
</feature>
<feature type="strand" evidence="9">
    <location>
        <begin position="476"/>
        <end position="481"/>
    </location>
</feature>
<feature type="helix" evidence="9">
    <location>
        <begin position="486"/>
        <end position="488"/>
    </location>
</feature>
<feature type="strand" evidence="9">
    <location>
        <begin position="508"/>
        <end position="510"/>
    </location>
</feature>
<feature type="strand" evidence="9">
    <location>
        <begin position="516"/>
        <end position="518"/>
    </location>
</feature>
<feature type="strand" evidence="11">
    <location>
        <begin position="520"/>
        <end position="522"/>
    </location>
</feature>
<feature type="strand" evidence="9">
    <location>
        <begin position="524"/>
        <end position="532"/>
    </location>
</feature>
<feature type="strand" evidence="9">
    <location>
        <begin position="538"/>
        <end position="545"/>
    </location>
</feature>
<feature type="strand" evidence="9">
    <location>
        <begin position="551"/>
        <end position="553"/>
    </location>
</feature>
<feature type="strand" evidence="10">
    <location>
        <begin position="556"/>
        <end position="558"/>
    </location>
</feature>
<feature type="helix" evidence="9">
    <location>
        <begin position="561"/>
        <end position="573"/>
    </location>
</feature>
<feature type="strand" evidence="9">
    <location>
        <begin position="577"/>
        <end position="583"/>
    </location>
</feature>
<feature type="strand" evidence="9">
    <location>
        <begin position="586"/>
        <end position="591"/>
    </location>
</feature>
<feature type="helix" evidence="9">
    <location>
        <begin position="592"/>
        <end position="603"/>
    </location>
</feature>
<feature type="helix" evidence="9">
    <location>
        <begin position="607"/>
        <end position="616"/>
    </location>
</feature>
<feature type="helix" evidence="9">
    <location>
        <begin position="619"/>
        <end position="625"/>
    </location>
</feature>
<feature type="helix" evidence="9">
    <location>
        <begin position="637"/>
        <end position="645"/>
    </location>
</feature>
<feature type="helix" evidence="9">
    <location>
        <begin position="653"/>
        <end position="656"/>
    </location>
</feature>
<feature type="strand" evidence="9">
    <location>
        <begin position="662"/>
        <end position="668"/>
    </location>
</feature>
<feature type="strand" evidence="9">
    <location>
        <begin position="678"/>
        <end position="685"/>
    </location>
</feature>
<feature type="helix" evidence="9">
    <location>
        <begin position="692"/>
        <end position="702"/>
    </location>
</feature>
<feature type="helix" evidence="9">
    <location>
        <begin position="705"/>
        <end position="707"/>
    </location>
</feature>
<feature type="helix" evidence="9">
    <location>
        <begin position="711"/>
        <end position="714"/>
    </location>
</feature>
<feature type="turn" evidence="9">
    <location>
        <begin position="715"/>
        <end position="720"/>
    </location>
</feature>
<feature type="helix" evidence="9">
    <location>
        <begin position="721"/>
        <end position="733"/>
    </location>
</feature>
<feature type="helix" evidence="9">
    <location>
        <begin position="745"/>
        <end position="755"/>
    </location>
</feature>
<feature type="strand" evidence="9">
    <location>
        <begin position="758"/>
        <end position="760"/>
    </location>
</feature>
<feature type="helix" evidence="9">
    <location>
        <begin position="761"/>
        <end position="769"/>
    </location>
</feature>
<feature type="turn" evidence="9">
    <location>
        <begin position="775"/>
        <end position="778"/>
    </location>
</feature>
<feature type="helix" evidence="9">
    <location>
        <begin position="779"/>
        <end position="796"/>
    </location>
</feature>
<feature type="helix" evidence="9">
    <location>
        <begin position="800"/>
        <end position="804"/>
    </location>
</feature>
<feature type="helix" evidence="9">
    <location>
        <begin position="805"/>
        <end position="819"/>
    </location>
</feature>
<feature type="helix" evidence="9">
    <location>
        <begin position="822"/>
        <end position="825"/>
    </location>
</feature>
<feature type="turn" evidence="9">
    <location>
        <begin position="826"/>
        <end position="830"/>
    </location>
</feature>
<feature type="helix" evidence="9">
    <location>
        <begin position="848"/>
        <end position="861"/>
    </location>
</feature>
<feature type="helix" evidence="9">
    <location>
        <begin position="866"/>
        <end position="871"/>
    </location>
</feature>
<feature type="helix" evidence="9">
    <location>
        <begin position="878"/>
        <end position="886"/>
    </location>
</feature>
<feature type="strand" evidence="9">
    <location>
        <begin position="895"/>
        <end position="898"/>
    </location>
</feature>
<feature type="strand" evidence="8">
    <location>
        <begin position="900"/>
        <end position="903"/>
    </location>
</feature>
<feature type="helix" evidence="9">
    <location>
        <begin position="905"/>
        <end position="907"/>
    </location>
</feature>
<feature type="strand" evidence="9">
    <location>
        <begin position="909"/>
        <end position="912"/>
    </location>
</feature>
<feature type="strand" evidence="8">
    <location>
        <begin position="914"/>
        <end position="916"/>
    </location>
</feature>
<reference key="1">
    <citation type="journal article" date="2000" name="Nature">
        <title>Complete genome sequence of Pseudomonas aeruginosa PAO1, an opportunistic pathogen.</title>
        <authorList>
            <person name="Stover C.K."/>
            <person name="Pham X.-Q.T."/>
            <person name="Erwin A.L."/>
            <person name="Mizoguchi S.D."/>
            <person name="Warrener P."/>
            <person name="Hickey M.J."/>
            <person name="Brinkman F.S.L."/>
            <person name="Hufnagle W.O."/>
            <person name="Kowalik D.J."/>
            <person name="Lagrou M."/>
            <person name="Garber R.L."/>
            <person name="Goltry L."/>
            <person name="Tolentino E."/>
            <person name="Westbrock-Wadman S."/>
            <person name="Yuan Y."/>
            <person name="Brody L.L."/>
            <person name="Coulter S.N."/>
            <person name="Folger K.R."/>
            <person name="Kas A."/>
            <person name="Larbig K."/>
            <person name="Lim R.M."/>
            <person name="Smith K.A."/>
            <person name="Spencer D.H."/>
            <person name="Wong G.K.-S."/>
            <person name="Wu Z."/>
            <person name="Paulsen I.T."/>
            <person name="Reizer J."/>
            <person name="Saier M.H. Jr."/>
            <person name="Hancock R.E.W."/>
            <person name="Lory S."/>
            <person name="Olson M.V."/>
        </authorList>
    </citation>
    <scope>NUCLEOTIDE SEQUENCE [LARGE SCALE GENOMIC DNA]</scope>
    <source>
        <strain>ATCC 15692 / DSM 22644 / CIP 104116 / JCM 14847 / LMG 12228 / 1C / PRS 101 / PAO1</strain>
    </source>
</reference>
<reference key="2">
    <citation type="journal article" date="2012" name="Cell. Microbiol.">
        <title>Identification of an immunomodulating metalloprotease of Pseudomonas aeruginosa (IMPa).</title>
        <authorList>
            <person name="Bardoel B.W."/>
            <person name="Hartsink D."/>
            <person name="Vughs M.M."/>
            <person name="de Haas C.J."/>
            <person name="van Strijp J.A."/>
            <person name="van Kessel K.P."/>
        </authorList>
    </citation>
    <scope>FUNCTION</scope>
    <scope>CATALYTIC ACTIVITY</scope>
    <scope>SUBSTRATE SPECIFICITY</scope>
    <scope>SUBCELLULAR LOCATION</scope>
    <scope>IDENTIFICATION BY MASS SPECTROMETRY</scope>
    <scope>ACTIVITY REGULATION</scope>
    <scope>COFACTOR</scope>
    <source>
        <strain>ATCC 15692 / DSM 22644 / CIP 104116 / JCM 14847 / LMG 12228 / 1C / PRS 101 / PAO1</strain>
    </source>
</reference>